<evidence type="ECO:0000250" key="1"/>
<evidence type="ECO:0000256" key="2">
    <source>
        <dbReference type="SAM" id="MobiDB-lite"/>
    </source>
</evidence>
<evidence type="ECO:0000269" key="3">
    <source>
    </source>
</evidence>
<organismHost>
    <name type="scientific">Tupaia belangeri</name>
    <name type="common">Common tree shrew</name>
    <name type="synonym">Tupaia glis belangeri</name>
    <dbReference type="NCBI Taxonomy" id="37347"/>
</organismHost>
<name>V_TPMV</name>
<keyword id="KW-0945">Host-virus interaction</keyword>
<keyword id="KW-1090">Inhibition of host innate immune response by virus</keyword>
<keyword id="KW-1089">Inhibition of host MDA5 by virus</keyword>
<keyword id="KW-1113">Inhibition of host RLR pathway by virus</keyword>
<keyword id="KW-0922">Interferon antiviral system evasion</keyword>
<keyword id="KW-0479">Metal-binding</keyword>
<keyword id="KW-1185">Reference proteome</keyword>
<keyword id="KW-0691">RNA editing</keyword>
<keyword id="KW-0899">Viral immunoevasion</keyword>
<keyword id="KW-0862">Zinc</keyword>
<comment type="function">
    <text evidence="1">Blocks host interferon signaling.</text>
</comment>
<comment type="RNA editing">
    <location>
        <position position="229" evidence="3"/>
    </location>
    <text>Partially edited. RNA editing at this position consists of an insertion of one guanine nucleotide. The sequence displayed here is the V protein, derived from the unedited RNA. The edited RNA gives rise to the P protein (AC Q9WS39).</text>
</comment>
<gene>
    <name type="primary">P/V</name>
</gene>
<accession>Q9QM81</accession>
<feature type="chain" id="PRO_0000142832" description="Non-structural protein V">
    <location>
        <begin position="1"/>
        <end position="282"/>
    </location>
</feature>
<feature type="region of interest" description="Disordered" evidence="2">
    <location>
        <begin position="29"/>
        <end position="225"/>
    </location>
</feature>
<feature type="compositionally biased region" description="Basic and acidic residues" evidence="2">
    <location>
        <begin position="49"/>
        <end position="60"/>
    </location>
</feature>
<feature type="compositionally biased region" description="Basic and acidic residues" evidence="2">
    <location>
        <begin position="120"/>
        <end position="134"/>
    </location>
</feature>
<feature type="compositionally biased region" description="Polar residues" evidence="2">
    <location>
        <begin position="135"/>
        <end position="161"/>
    </location>
</feature>
<feature type="binding site" evidence="1">
    <location>
        <position position="230"/>
    </location>
    <ligand>
        <name>Zn(2+)</name>
        <dbReference type="ChEBI" id="CHEBI:29105"/>
        <label>1</label>
    </ligand>
</feature>
<feature type="binding site" evidence="1">
    <location>
        <position position="249"/>
    </location>
    <ligand>
        <name>Zn(2+)</name>
        <dbReference type="ChEBI" id="CHEBI:29105"/>
        <label>1</label>
    </ligand>
</feature>
<feature type="binding site" evidence="1">
    <location>
        <position position="253"/>
    </location>
    <ligand>
        <name>Zn(2+)</name>
        <dbReference type="ChEBI" id="CHEBI:29105"/>
        <label>2</label>
    </ligand>
</feature>
<feature type="binding site" evidence="1">
    <location>
        <position position="265"/>
    </location>
    <ligand>
        <name>Zn(2+)</name>
        <dbReference type="ChEBI" id="CHEBI:29105"/>
        <label>2</label>
    </ligand>
</feature>
<feature type="binding site" evidence="1">
    <location>
        <position position="267"/>
    </location>
    <ligand>
        <name>Zn(2+)</name>
        <dbReference type="ChEBI" id="CHEBI:29105"/>
        <label>2</label>
    </ligand>
</feature>
<feature type="binding site" evidence="1">
    <location>
        <position position="270"/>
    </location>
    <ligand>
        <name>Zn(2+)</name>
        <dbReference type="ChEBI" id="CHEBI:29105"/>
        <label>2</label>
    </ligand>
</feature>
<feature type="binding site" evidence="1">
    <location>
        <position position="274"/>
    </location>
    <ligand>
        <name>Zn(2+)</name>
        <dbReference type="ChEBI" id="CHEBI:29105"/>
        <label>1</label>
    </ligand>
</feature>
<feature type="binding site" evidence="1">
    <location>
        <position position="277"/>
    </location>
    <ligand>
        <name>Zn(2+)</name>
        <dbReference type="ChEBI" id="CHEBI:29105"/>
        <label>1</label>
    </ligand>
</feature>
<reference key="1">
    <citation type="journal article" date="1999" name="Virology">
        <title>Isolation and molecular characterization of a novel cytopathogenic paramyxovirus from tree shrews.</title>
        <authorList>
            <person name="Tidona C.A."/>
            <person name="Kurz H.W."/>
            <person name="Gelderblom H.R."/>
            <person name="Darai G."/>
        </authorList>
    </citation>
    <scope>NUCLEOTIDE SEQUENCE [GENOMIC RNA]</scope>
    <scope>RNA EDITING</scope>
</reference>
<proteinExistence type="inferred from homology"/>
<dbReference type="EMBL" id="AF079780">
    <property type="protein sequence ID" value="AAD28696.2"/>
    <property type="molecule type" value="Genomic_RNA"/>
</dbReference>
<dbReference type="RefSeq" id="NP_054692.1">
    <property type="nucleotide sequence ID" value="NC_002199.1"/>
</dbReference>
<dbReference type="SMR" id="Q9QM81"/>
<dbReference type="OrthoDB" id="10126at10239"/>
<dbReference type="Proteomes" id="UP000136220">
    <property type="component" value="Genome"/>
</dbReference>
<dbReference type="GO" id="GO:0046872">
    <property type="term" value="F:metal ion binding"/>
    <property type="evidence" value="ECO:0007669"/>
    <property type="project" value="UniProtKB-KW"/>
</dbReference>
<dbReference type="GO" id="GO:0039554">
    <property type="term" value="P:symbiont-mediated suppression of host cytoplasmic pattern recognition receptor signaling pathway via inhibition of MDA-5 activity"/>
    <property type="evidence" value="ECO:0007669"/>
    <property type="project" value="UniProtKB-KW"/>
</dbReference>
<dbReference type="Gene3D" id="4.10.80.340">
    <property type="match status" value="1"/>
</dbReference>
<dbReference type="InterPro" id="IPR024279">
    <property type="entry name" value="Paramyx_V_Zn-bd"/>
</dbReference>
<dbReference type="Pfam" id="PF13008">
    <property type="entry name" value="zf-Paramyx-P"/>
    <property type="match status" value="1"/>
</dbReference>
<protein>
    <recommendedName>
        <fullName>Non-structural protein V</fullName>
    </recommendedName>
</protein>
<sequence length="282" mass="30704">MNNTEIIENASKVLEAIDAAKEEELRNLNSLVQPRAPLNAGSTPGEIINEIKHLSTRDQEGGTSSKDEEESGAGRTVAEGAATRDHKYSKSRPKKQPRSGLQSGAAGKNPTPDGEGGDTCNRELDQHSDGDGHSNTEGASSDLASIQPCQTDDAPCSSTSYLDEEDEPAVRPKTQCKQSGLIESKEDEDGMLSELHEQHKGRSKRLSALGRVNSSPIPSPRPDELLKKGHRREYSMVWSNDGVFIESWCNPMCARIRPLPIREICVCGRCPLKCSKCLLDPE</sequence>
<organism>
    <name type="scientific">Tupaia paramyxovirus</name>
    <name type="common">TPMV</name>
    <dbReference type="NCBI Taxonomy" id="92129"/>
    <lineage>
        <taxon>Viruses</taxon>
        <taxon>Riboviria</taxon>
        <taxon>Orthornavirae</taxon>
        <taxon>Negarnaviricota</taxon>
        <taxon>Haploviricotina</taxon>
        <taxon>Monjiviricetes</taxon>
        <taxon>Mononegavirales</taxon>
        <taxon>Paramyxoviridae</taxon>
        <taxon>Orthoparamyxovirinae</taxon>
        <taxon>Narmovirus</taxon>
        <taxon>Narmovirus tupaiae</taxon>
    </lineage>
</organism>